<accession>P69266</accession>
<accession>P26133</accession>
<dbReference type="EMBL" id="M81578">
    <property type="protein sequence ID" value="AAA19200.1"/>
    <property type="molecule type" value="Unassigned_RNA"/>
</dbReference>
<dbReference type="SMR" id="P69266"/>
<dbReference type="GO" id="GO:0042025">
    <property type="term" value="C:host cell nucleus"/>
    <property type="evidence" value="ECO:0007669"/>
    <property type="project" value="UniProtKB-SubCell"/>
</dbReference>
<dbReference type="GO" id="GO:0044423">
    <property type="term" value="C:virion component"/>
    <property type="evidence" value="ECO:0007669"/>
    <property type="project" value="UniProtKB-UniRule"/>
</dbReference>
<dbReference type="GO" id="GO:0039675">
    <property type="term" value="P:exit of virus from host cell nucleus through nuclear pore"/>
    <property type="evidence" value="ECO:0007669"/>
    <property type="project" value="UniProtKB-UniRule"/>
</dbReference>
<dbReference type="Gene3D" id="1.10.287.230">
    <property type="match status" value="1"/>
</dbReference>
<dbReference type="Gene3D" id="1.10.287.10">
    <property type="entry name" value="S15/NS1, RNA-binding"/>
    <property type="match status" value="1"/>
</dbReference>
<dbReference type="HAMAP" id="MF_04067">
    <property type="entry name" value="INFV_NEP"/>
    <property type="match status" value="1"/>
</dbReference>
<dbReference type="InterPro" id="IPR000968">
    <property type="entry name" value="Flu_NS2"/>
</dbReference>
<dbReference type="Pfam" id="PF00601">
    <property type="entry name" value="Flu_NS2"/>
    <property type="match status" value="1"/>
</dbReference>
<dbReference type="SUPFAM" id="SSF101156">
    <property type="entry name" value="Nonstructural protein ns2, Nep, M1-binding domain"/>
    <property type="match status" value="1"/>
</dbReference>
<reference key="1">
    <citation type="journal article" date="1992" name="Virology">
        <title>Sequence changes in the live attenuated, cold-adapted variants of influenza A/Leningrad/134/57 (H2N2) virus.</title>
        <authorList>
            <person name="Klimov A.I."/>
            <person name="Cox N.J."/>
            <person name="Yotov W.V."/>
            <person name="Rocha E."/>
            <person name="Alexandrova G.I."/>
            <person name="Kendal A.P."/>
        </authorList>
    </citation>
    <scope>NUCLEOTIDE SEQUENCE</scope>
</reference>
<evidence type="ECO:0000255" key="1">
    <source>
        <dbReference type="HAMAP-Rule" id="MF_04067"/>
    </source>
</evidence>
<organism>
    <name type="scientific">Influenza A virus (strain A/Leningrad/134/17/1957 H2N2)</name>
    <dbReference type="NCBI Taxonomy" id="380984"/>
    <lineage>
        <taxon>Viruses</taxon>
        <taxon>Riboviria</taxon>
        <taxon>Orthornavirae</taxon>
        <taxon>Negarnaviricota</taxon>
        <taxon>Polyploviricotina</taxon>
        <taxon>Insthoviricetes</taxon>
        <taxon>Articulavirales</taxon>
        <taxon>Orthomyxoviridae</taxon>
        <taxon>Alphainfluenzavirus</taxon>
        <taxon>Alphainfluenzavirus influenzae</taxon>
        <taxon>Influenza A virus</taxon>
    </lineage>
</organism>
<gene>
    <name evidence="1" type="primary">NS</name>
</gene>
<protein>
    <recommendedName>
        <fullName evidence="1">Nuclear export protein</fullName>
        <shortName evidence="1">NEP</shortName>
    </recommendedName>
    <alternativeName>
        <fullName evidence="1">Non-structural protein 2</fullName>
        <shortName evidence="1">NS2</shortName>
    </alternativeName>
</protein>
<keyword id="KW-0025">Alternative splicing</keyword>
<keyword id="KW-1048">Host nucleus</keyword>
<keyword id="KW-0945">Host-virus interaction</keyword>
<keyword id="KW-0813">Transport</keyword>
<keyword id="KW-0946">Virion</keyword>
<comment type="function">
    <text evidence="1">Mediates the nuclear export of encapsidated genomic RNAs (ribonucleoproteins, RNPs). Acts as an adapter between viral RNPs complexes and the nuclear export machinery of the cell. Possesses no intrinsic RNA-binding activity, but includes a C-terminal M1-binding domain. This domain is believed to allow recognition of RNPs bound to the protein M1. Since protein M1 is not available in large quantities before late stages of infection, such an indirect recognition mechanism probably ensures that genomic RNPs are not exported from the host nucleus until sufficient quantities of viral mRNA and progeny genomic RNA have been synthesized. Furthermore, the RNPs enter the host cytoplasm only when associated with the M1 protein that is necessary to guide them to the plasma membrane. May down-regulate viral RNA synthesis when overproduced.</text>
</comment>
<comment type="subunit">
    <text evidence="1">Interacts with protein M1. May interact with host nucleoporin RAB/HRB and exportin XPO1/CRM1.</text>
</comment>
<comment type="subcellular location">
    <subcellularLocation>
        <location evidence="1">Virion</location>
    </subcellularLocation>
    <subcellularLocation>
        <location evidence="1">Host nucleus</location>
    </subcellularLocation>
</comment>
<comment type="alternative products">
    <event type="alternative splicing"/>
    <isoform>
        <id>P69266-1</id>
        <name>NEP</name>
        <name>NS2</name>
        <sequence type="displayed"/>
    </isoform>
    <isoform>
        <id>P69273-1</id>
        <name>NS1</name>
        <sequence type="external"/>
    </isoform>
</comment>
<comment type="miscellaneous">
    <text>Average number present in a viral particle is estimated to be 130-200 molecules.</text>
</comment>
<comment type="similarity">
    <text evidence="1">Belongs to the influenza viruses NEP family.</text>
</comment>
<name>NEP_I57A2</name>
<organismHost>
    <name type="scientific">Aves</name>
    <dbReference type="NCBI Taxonomy" id="8782"/>
</organismHost>
<organismHost>
    <name type="scientific">Homo sapiens</name>
    <name type="common">Human</name>
    <dbReference type="NCBI Taxonomy" id="9606"/>
</organismHost>
<proteinExistence type="inferred from homology"/>
<feature type="chain" id="PRO_0000078993" description="Nuclear export protein">
    <location>
        <begin position="1"/>
        <end position="121"/>
    </location>
</feature>
<feature type="short sequence motif" description="Nuclear export signal" evidence="1">
    <location>
        <begin position="12"/>
        <end position="21"/>
    </location>
</feature>
<feature type="short sequence motif" description="Nuclear export signal" evidence="1">
    <location>
        <begin position="85"/>
        <end position="94"/>
    </location>
</feature>
<sequence>MDPNTVSSFQDILMRMSKMQLGSSSEDLNGMITQFESLKLYRDSLGEAVMRMGDLHSLQNRNGKWREQLGQKFEEIRWLIEEVRHKLKITENSFEQITFIQALQLLFEVEQEIRTFSFQLI</sequence>